<feature type="initiator methionine" description="Removed" evidence="8">
    <location>
        <position position="1"/>
    </location>
</feature>
<feature type="chain" id="PRO_0000053328" description="Myoglobin">
    <location>
        <begin position="2"/>
        <end position="154"/>
    </location>
</feature>
<feature type="domain" description="Globin" evidence="7">
    <location>
        <begin position="2"/>
        <end position="148"/>
    </location>
</feature>
<feature type="binding site" evidence="5">
    <location>
        <position position="65"/>
    </location>
    <ligand>
        <name>nitrite</name>
        <dbReference type="ChEBI" id="CHEBI:16301"/>
    </ligand>
</feature>
<feature type="binding site" evidence="3 7">
    <location>
        <position position="65"/>
    </location>
    <ligand>
        <name>O2</name>
        <dbReference type="ChEBI" id="CHEBI:15379"/>
    </ligand>
</feature>
<feature type="binding site" description="proximal binding residue" evidence="1">
    <location>
        <position position="94"/>
    </location>
    <ligand>
        <name>heme b</name>
        <dbReference type="ChEBI" id="CHEBI:60344"/>
    </ligand>
    <ligandPart>
        <name>Fe</name>
        <dbReference type="ChEBI" id="CHEBI:18248"/>
    </ligandPart>
</feature>
<feature type="modified residue" description="Phosphoserine" evidence="6">
    <location>
        <position position="4"/>
    </location>
</feature>
<feature type="modified residue" description="Phosphothreonine" evidence="4">
    <location>
        <position position="68"/>
    </location>
</feature>
<accession>P02145</accession>
<gene>
    <name type="primary">MB</name>
</gene>
<evidence type="ECO:0000250" key="1">
    <source>
        <dbReference type="UniProtKB" id="P02144"/>
    </source>
</evidence>
<evidence type="ECO:0000250" key="2">
    <source>
        <dbReference type="UniProtKB" id="P02185"/>
    </source>
</evidence>
<evidence type="ECO:0000250" key="3">
    <source>
        <dbReference type="UniProtKB" id="P02189"/>
    </source>
</evidence>
<evidence type="ECO:0000250" key="4">
    <source>
        <dbReference type="UniProtKB" id="P04247"/>
    </source>
</evidence>
<evidence type="ECO:0000250" key="5">
    <source>
        <dbReference type="UniProtKB" id="P68082"/>
    </source>
</evidence>
<evidence type="ECO:0000250" key="6">
    <source>
        <dbReference type="UniProtKB" id="Q9QZ76"/>
    </source>
</evidence>
<evidence type="ECO:0000255" key="7">
    <source>
        <dbReference type="PROSITE-ProRule" id="PRU00238"/>
    </source>
</evidence>
<evidence type="ECO:0000269" key="8">
    <source>
    </source>
</evidence>
<name>MYG_PANTR</name>
<reference key="1">
    <citation type="journal article" date="1972" name="Biochim. Biophys. Acta">
        <title>The myoglobin of primates. II. Pan troglodytes (chimpanzee).</title>
        <authorList>
            <person name="Romero-Herrera A.E."/>
            <person name="Lehmann H."/>
        </authorList>
    </citation>
    <scope>PROTEIN SEQUENCE OF 2-154</scope>
    <source>
        <tissue>Skeletal muscle</tissue>
    </source>
</reference>
<dbReference type="EC" id="1.7.-.-" evidence="1"/>
<dbReference type="EC" id="1.11.1.-" evidence="1"/>
<dbReference type="PIR" id="A02465">
    <property type="entry name" value="MYCZ"/>
</dbReference>
<dbReference type="RefSeq" id="XP_016794562.1">
    <property type="nucleotide sequence ID" value="XM_016939073.1"/>
</dbReference>
<dbReference type="RefSeq" id="XP_024208661.1">
    <property type="nucleotide sequence ID" value="XM_024352893.2"/>
</dbReference>
<dbReference type="RefSeq" id="XP_024208662.1">
    <property type="nucleotide sequence ID" value="XM_024352894.2"/>
</dbReference>
<dbReference type="RefSeq" id="XP_024208663.1">
    <property type="nucleotide sequence ID" value="XM_024352895.2"/>
</dbReference>
<dbReference type="SMR" id="P02145"/>
<dbReference type="FunCoup" id="P02145">
    <property type="interactions" value="161"/>
</dbReference>
<dbReference type="STRING" id="9598.ENSPTRP00000054996"/>
<dbReference type="PaxDb" id="9598-ENSPTRP00000054996"/>
<dbReference type="Ensembl" id="ENSPTRT00000062439.4">
    <property type="protein sequence ID" value="ENSPTRP00000054996.3"/>
    <property type="gene ID" value="ENSPTRG00000023553.6"/>
</dbReference>
<dbReference type="GeneID" id="740117"/>
<dbReference type="VGNC" id="VGNC:5276">
    <property type="gene designation" value="MB"/>
</dbReference>
<dbReference type="eggNOG" id="KOG3378">
    <property type="taxonomic scope" value="Eukaryota"/>
</dbReference>
<dbReference type="GeneTree" id="ENSGT00940000160809"/>
<dbReference type="HOGENOM" id="CLU_003827_18_0_1"/>
<dbReference type="InParanoid" id="P02145"/>
<dbReference type="OMA" id="VIIRMFQ"/>
<dbReference type="TreeFam" id="TF332967"/>
<dbReference type="Proteomes" id="UP000002277">
    <property type="component" value="Chromosome 22"/>
</dbReference>
<dbReference type="Bgee" id="ENSPTRG00000023553">
    <property type="expression patterns" value="Expressed in skeletal muscle tissue and 11 other cell types or tissues"/>
</dbReference>
<dbReference type="GO" id="GO:0016528">
    <property type="term" value="C:sarcoplasm"/>
    <property type="evidence" value="ECO:0000250"/>
    <property type="project" value="UniProtKB"/>
</dbReference>
<dbReference type="GO" id="GO:0020037">
    <property type="term" value="F:heme binding"/>
    <property type="evidence" value="ECO:0007669"/>
    <property type="project" value="InterPro"/>
</dbReference>
<dbReference type="GO" id="GO:0046872">
    <property type="term" value="F:metal ion binding"/>
    <property type="evidence" value="ECO:0007669"/>
    <property type="project" value="UniProtKB-KW"/>
</dbReference>
<dbReference type="GO" id="GO:0098809">
    <property type="term" value="F:nitrite reductase activity"/>
    <property type="evidence" value="ECO:0000250"/>
    <property type="project" value="UniProtKB"/>
</dbReference>
<dbReference type="GO" id="GO:0019825">
    <property type="term" value="F:oxygen binding"/>
    <property type="evidence" value="ECO:0000318"/>
    <property type="project" value="GO_Central"/>
</dbReference>
<dbReference type="GO" id="GO:0005344">
    <property type="term" value="F:oxygen carrier activity"/>
    <property type="evidence" value="ECO:0000250"/>
    <property type="project" value="UniProtKB"/>
</dbReference>
<dbReference type="GO" id="GO:0004601">
    <property type="term" value="F:peroxidase activity"/>
    <property type="evidence" value="ECO:0000250"/>
    <property type="project" value="UniProtKB"/>
</dbReference>
<dbReference type="GO" id="GO:0015671">
    <property type="term" value="P:oxygen transport"/>
    <property type="evidence" value="ECO:0000318"/>
    <property type="project" value="GO_Central"/>
</dbReference>
<dbReference type="GO" id="GO:0019430">
    <property type="term" value="P:removal of superoxide radicals"/>
    <property type="evidence" value="ECO:0000250"/>
    <property type="project" value="UniProtKB"/>
</dbReference>
<dbReference type="CDD" id="cd08926">
    <property type="entry name" value="Mb"/>
    <property type="match status" value="1"/>
</dbReference>
<dbReference type="Gene3D" id="6.10.140.2100">
    <property type="match status" value="1"/>
</dbReference>
<dbReference type="Gene3D" id="6.10.140.2110">
    <property type="match status" value="1"/>
</dbReference>
<dbReference type="InterPro" id="IPR000971">
    <property type="entry name" value="Globin"/>
</dbReference>
<dbReference type="InterPro" id="IPR009050">
    <property type="entry name" value="Globin-like_sf"/>
</dbReference>
<dbReference type="InterPro" id="IPR002335">
    <property type="entry name" value="Myoglobin"/>
</dbReference>
<dbReference type="PANTHER" id="PTHR47132">
    <property type="entry name" value="MYOGLOBIN"/>
    <property type="match status" value="1"/>
</dbReference>
<dbReference type="PANTHER" id="PTHR47132:SF1">
    <property type="entry name" value="MYOGLOBIN"/>
    <property type="match status" value="1"/>
</dbReference>
<dbReference type="Pfam" id="PF00042">
    <property type="entry name" value="Globin"/>
    <property type="match status" value="1"/>
</dbReference>
<dbReference type="PRINTS" id="PR00613">
    <property type="entry name" value="MYOGLOBIN"/>
</dbReference>
<dbReference type="SUPFAM" id="SSF46458">
    <property type="entry name" value="Globin-like"/>
    <property type="match status" value="1"/>
</dbReference>
<dbReference type="PROSITE" id="PS01033">
    <property type="entry name" value="GLOBIN"/>
    <property type="match status" value="1"/>
</dbReference>
<comment type="function">
    <text evidence="1">Monomeric heme protein which primary function is to store oxygen and facilitate its diffusion within muscle tissues. Reversibly binds oxygen through a pentacoordinated heme iron and enables its timely and efficient release as needed during periods of heightened demand. Depending on the oxidative conditions of tissues and cells, and in addition to its ability to bind oxygen, it also has a nitrite reductase activity whereby it regulates the production of bioactive nitric oxide. Under stress conditions, like hypoxia and anoxia, it also protects cells against reactive oxygen species thanks to its pseudoperoxidase activity.</text>
</comment>
<comment type="catalytic activity">
    <reaction evidence="1">
        <text>Fe(III)-heme b-[protein] + nitric oxide + H2O = Fe(II)-heme b-[protein] + nitrite + 2 H(+)</text>
        <dbReference type="Rhea" id="RHEA:77711"/>
        <dbReference type="Rhea" id="RHEA-COMP:18975"/>
        <dbReference type="Rhea" id="RHEA-COMP:18976"/>
        <dbReference type="ChEBI" id="CHEBI:15377"/>
        <dbReference type="ChEBI" id="CHEBI:15378"/>
        <dbReference type="ChEBI" id="CHEBI:16301"/>
        <dbReference type="ChEBI" id="CHEBI:16480"/>
        <dbReference type="ChEBI" id="CHEBI:55376"/>
        <dbReference type="ChEBI" id="CHEBI:60344"/>
    </reaction>
    <physiologicalReaction direction="right-to-left" evidence="1">
        <dbReference type="Rhea" id="RHEA:77713"/>
    </physiologicalReaction>
</comment>
<comment type="catalytic activity">
    <reaction evidence="1">
        <text>H2O2 + AH2 = A + 2 H2O</text>
        <dbReference type="Rhea" id="RHEA:30275"/>
        <dbReference type="ChEBI" id="CHEBI:13193"/>
        <dbReference type="ChEBI" id="CHEBI:15377"/>
        <dbReference type="ChEBI" id="CHEBI:16240"/>
        <dbReference type="ChEBI" id="CHEBI:17499"/>
    </reaction>
</comment>
<comment type="subunit">
    <text evidence="2">Monomeric.</text>
</comment>
<comment type="subcellular location">
    <subcellularLocation>
        <location evidence="1">Cytoplasm</location>
        <location evidence="1">Sarcoplasm</location>
    </subcellularLocation>
</comment>
<comment type="similarity">
    <text evidence="7">Belongs to the globin family.</text>
</comment>
<organism>
    <name type="scientific">Pan troglodytes</name>
    <name type="common">Chimpanzee</name>
    <dbReference type="NCBI Taxonomy" id="9598"/>
    <lineage>
        <taxon>Eukaryota</taxon>
        <taxon>Metazoa</taxon>
        <taxon>Chordata</taxon>
        <taxon>Craniata</taxon>
        <taxon>Vertebrata</taxon>
        <taxon>Euteleostomi</taxon>
        <taxon>Mammalia</taxon>
        <taxon>Eutheria</taxon>
        <taxon>Euarchontoglires</taxon>
        <taxon>Primates</taxon>
        <taxon>Haplorrhini</taxon>
        <taxon>Catarrhini</taxon>
        <taxon>Hominidae</taxon>
        <taxon>Pan</taxon>
    </lineage>
</organism>
<proteinExistence type="evidence at protein level"/>
<protein>
    <recommendedName>
        <fullName>Myoglobin</fullName>
    </recommendedName>
    <alternativeName>
        <fullName evidence="1">Nitrite reductase MB</fullName>
        <ecNumber evidence="1">1.7.-.-</ecNumber>
    </alternativeName>
    <alternativeName>
        <fullName evidence="1">Pseudoperoxidase MB</fullName>
        <ecNumber evidence="1">1.11.1.-</ecNumber>
    </alternativeName>
</protein>
<sequence>MGLSDGEWQLVLNVWGKVEADIPGHGQEVLIRLFKGHPETLEKFDKFKHLKSEDEMKASEDLKKHGATVLTALGGILKKKGHHEAEIKPLAQSHATKHKIPVKYLEFISECIIQVLHSKHPGDFGADAQGAMNKALELFRKDMASNYKELGFQG</sequence>
<keyword id="KW-0963">Cytoplasm</keyword>
<keyword id="KW-0903">Direct protein sequencing</keyword>
<keyword id="KW-0349">Heme</keyword>
<keyword id="KW-0408">Iron</keyword>
<keyword id="KW-0479">Metal-binding</keyword>
<keyword id="KW-0514">Muscle protein</keyword>
<keyword id="KW-0560">Oxidoreductase</keyword>
<keyword id="KW-0561">Oxygen transport</keyword>
<keyword id="KW-0597">Phosphoprotein</keyword>
<keyword id="KW-1185">Reference proteome</keyword>
<keyword id="KW-0813">Transport</keyword>